<sequence>MQIFVKTLTGKTITLDVEQSDTIDNVKTKIQDKEGIPPDQQRLIFAGKQLEDGRTLADYNIQKESTLHLVLRLRGGMQIFVKTLTGKTITLDVEQSDTIDNVKTKIQDKEGIPPDQQRLIFAGKQLEDGRTLADYNIQKESTLHLVLRLRGGMQIFVKTLTGKTITLDVEQSDTIDNVKTKIQDKEGIPPDQQRLIFAGKQLEDGRTLADYNIQKESTLHLVLRLRGGF</sequence>
<organism>
    <name type="scientific">Euplotes eurystomus</name>
    <name type="common">Ciliate</name>
    <dbReference type="NCBI Taxonomy" id="5941"/>
    <lineage>
        <taxon>Eukaryota</taxon>
        <taxon>Sar</taxon>
        <taxon>Alveolata</taxon>
        <taxon>Ciliophora</taxon>
        <taxon>Intramacronucleata</taxon>
        <taxon>Spirotrichea</taxon>
        <taxon>Hypotrichia</taxon>
        <taxon>Euplotida</taxon>
        <taxon>Euplotidae</taxon>
        <taxon>Euplotes</taxon>
    </lineage>
</organism>
<comment type="function">
    <text evidence="1">Ubiquitin exists either covalently attached to another protein, or free (unanchored). When covalently bound, it is conjugated to target proteins via an isopeptide bond either as a monomer (monoubiquitin), a polymer linked via different Lys residues of the ubiquitin (polyubiquitin chains) or a linear polymer linked via the initiator Met of the ubiquitin (linear polyubiquitin chains). Polyubiquitin chains, when attached to a target protein, have different functions depending on the Lys residue of the ubiquitin that is linked: Lys-48-linked is involved in protein degradation via the proteasome. Linear polymer chains formed via attachment by the initiator Met lead to cell signaling. Ubiquitin is usually conjugated to Lys residues of target proteins, however, in rare cases, conjugation to Cys or Ser residues has been observed. When polyubiquitin is free (unanchored-polyubiquitin), it also has distinct roles, such as in activation of protein kinases, and in signaling (By similarity).</text>
</comment>
<comment type="subcellular location">
    <subcellularLocation>
        <location evidence="1">Cytoplasm</location>
    </subcellularLocation>
    <subcellularLocation>
        <location evidence="1">Nucleus</location>
    </subcellularLocation>
</comment>
<comment type="miscellaneous">
    <text>For the sake of clarity sequence features are annotated only for the first chain, and are not repeated for each of the following chains.</text>
</comment>
<comment type="similarity">
    <text evidence="3">Belongs to the ubiquitin family.</text>
</comment>
<evidence type="ECO:0000250" key="1"/>
<evidence type="ECO:0000255" key="2">
    <source>
        <dbReference type="PROSITE-ProRule" id="PRU00214"/>
    </source>
</evidence>
<evidence type="ECO:0000305" key="3"/>
<reference key="1">
    <citation type="journal article" date="1991" name="Chromosoma">
        <title>Structure of the macronuclear polyubiquitin gene in Euplotes.</title>
        <authorList>
            <person name="Hauser L.J."/>
            <person name="Roberson A.E."/>
            <person name="Olins D.E."/>
        </authorList>
    </citation>
    <scope>NUCLEOTIDE SEQUENCE [GENOMIC DNA]</scope>
</reference>
<name>UBIQP_EUPEU</name>
<accession>P23324</accession>
<keyword id="KW-0963">Cytoplasm</keyword>
<keyword id="KW-1017">Isopeptide bond</keyword>
<keyword id="KW-0539">Nucleus</keyword>
<keyword id="KW-0677">Repeat</keyword>
<keyword id="KW-0832">Ubl conjugation</keyword>
<feature type="chain" id="PRO_0000114824" description="Ubiquitin">
    <location>
        <begin position="1"/>
        <end position="76"/>
    </location>
</feature>
<feature type="chain" id="PRO_0000396359" description="Ubiquitin">
    <location>
        <begin position="77"/>
        <end position="152"/>
    </location>
</feature>
<feature type="chain" id="PRO_0000396360" description="Ubiquitin">
    <location>
        <begin position="153"/>
        <end position="228"/>
    </location>
</feature>
<feature type="propeptide" id="PRO_0000396361">
    <location>
        <position position="229"/>
    </location>
</feature>
<feature type="domain" description="Ubiquitin-like 1" evidence="2">
    <location>
        <begin position="1"/>
        <end position="76"/>
    </location>
</feature>
<feature type="domain" description="Ubiquitin-like 2" evidence="2">
    <location>
        <begin position="77"/>
        <end position="152"/>
    </location>
</feature>
<feature type="domain" description="Ubiquitin-like 3" evidence="2">
    <location>
        <begin position="153"/>
        <end position="228"/>
    </location>
</feature>
<feature type="cross-link" description="Glycyl lysine isopeptide (Lys-Gly) (interchain with G-Cter in ubiquitin)" evidence="1">
    <location>
        <position position="48"/>
    </location>
</feature>
<feature type="cross-link" description="Glycyl lysine isopeptide (Gly-Lys) (interchain with K-? in acceptor proteins)" evidence="2">
    <location>
        <position position="76"/>
    </location>
</feature>
<dbReference type="EMBL" id="M57231">
    <property type="protein sequence ID" value="AAA62225.1"/>
    <property type="molecule type" value="Genomic_DNA"/>
</dbReference>
<dbReference type="PIR" id="A56582">
    <property type="entry name" value="A56582"/>
</dbReference>
<dbReference type="SMR" id="P23324"/>
<dbReference type="GO" id="GO:0005737">
    <property type="term" value="C:cytoplasm"/>
    <property type="evidence" value="ECO:0007669"/>
    <property type="project" value="UniProtKB-SubCell"/>
</dbReference>
<dbReference type="GO" id="GO:0005634">
    <property type="term" value="C:nucleus"/>
    <property type="evidence" value="ECO:0007669"/>
    <property type="project" value="UniProtKB-SubCell"/>
</dbReference>
<dbReference type="CDD" id="cd01803">
    <property type="entry name" value="Ubl_ubiquitin"/>
    <property type="match status" value="3"/>
</dbReference>
<dbReference type="FunFam" id="3.10.20.90:FF:000016">
    <property type="entry name" value="Polyubiquitin 3"/>
    <property type="match status" value="1"/>
</dbReference>
<dbReference type="FunFam" id="3.10.20.90:FF:000014">
    <property type="entry name" value="Ubiquitin-60S ribosomal L40 fusion"/>
    <property type="match status" value="2"/>
</dbReference>
<dbReference type="Gene3D" id="3.10.20.90">
    <property type="entry name" value="Phosphatidylinositol 3-kinase Catalytic Subunit, Chain A, domain 1"/>
    <property type="match status" value="3"/>
</dbReference>
<dbReference type="InterPro" id="IPR000626">
    <property type="entry name" value="Ubiquitin-like_dom"/>
</dbReference>
<dbReference type="InterPro" id="IPR029071">
    <property type="entry name" value="Ubiquitin-like_domsf"/>
</dbReference>
<dbReference type="InterPro" id="IPR019954">
    <property type="entry name" value="Ubiquitin_CS"/>
</dbReference>
<dbReference type="InterPro" id="IPR019956">
    <property type="entry name" value="Ubiquitin_dom"/>
</dbReference>
<dbReference type="InterPro" id="IPR050158">
    <property type="entry name" value="Ubiquitin_ubiquitin-like"/>
</dbReference>
<dbReference type="PANTHER" id="PTHR10666">
    <property type="entry name" value="UBIQUITIN"/>
    <property type="match status" value="1"/>
</dbReference>
<dbReference type="Pfam" id="PF00240">
    <property type="entry name" value="ubiquitin"/>
    <property type="match status" value="3"/>
</dbReference>
<dbReference type="PRINTS" id="PR00348">
    <property type="entry name" value="UBIQUITIN"/>
</dbReference>
<dbReference type="SMART" id="SM00213">
    <property type="entry name" value="UBQ"/>
    <property type="match status" value="3"/>
</dbReference>
<dbReference type="SUPFAM" id="SSF54236">
    <property type="entry name" value="Ubiquitin-like"/>
    <property type="match status" value="3"/>
</dbReference>
<dbReference type="PROSITE" id="PS00299">
    <property type="entry name" value="UBIQUITIN_1"/>
    <property type="match status" value="3"/>
</dbReference>
<dbReference type="PROSITE" id="PS50053">
    <property type="entry name" value="UBIQUITIN_2"/>
    <property type="match status" value="3"/>
</dbReference>
<proteinExistence type="inferred from homology"/>
<protein>
    <recommendedName>
        <fullName>Polyubiquitin</fullName>
    </recommendedName>
    <component>
        <recommendedName>
            <fullName>Ubiquitin</fullName>
        </recommendedName>
    </component>
</protein>